<keyword id="KW-0687">Ribonucleoprotein</keyword>
<keyword id="KW-0689">Ribosomal protein</keyword>
<keyword id="KW-0694">RNA-binding</keyword>
<keyword id="KW-0699">rRNA-binding</keyword>
<feature type="chain" id="PRO_0000243143" description="Large ribosomal subunit protein uL22">
    <location>
        <begin position="1"/>
        <end position="109"/>
    </location>
</feature>
<dbReference type="EMBL" id="CP000089">
    <property type="protein sequence ID" value="AAZ45083.1"/>
    <property type="molecule type" value="Genomic_DNA"/>
</dbReference>
<dbReference type="SMR" id="Q47J98"/>
<dbReference type="STRING" id="159087.Daro_0324"/>
<dbReference type="KEGG" id="dar:Daro_0324"/>
<dbReference type="eggNOG" id="COG0091">
    <property type="taxonomic scope" value="Bacteria"/>
</dbReference>
<dbReference type="HOGENOM" id="CLU_083987_3_3_4"/>
<dbReference type="OrthoDB" id="9805969at2"/>
<dbReference type="GO" id="GO:0022625">
    <property type="term" value="C:cytosolic large ribosomal subunit"/>
    <property type="evidence" value="ECO:0007669"/>
    <property type="project" value="TreeGrafter"/>
</dbReference>
<dbReference type="GO" id="GO:0019843">
    <property type="term" value="F:rRNA binding"/>
    <property type="evidence" value="ECO:0007669"/>
    <property type="project" value="UniProtKB-UniRule"/>
</dbReference>
<dbReference type="GO" id="GO:0003735">
    <property type="term" value="F:structural constituent of ribosome"/>
    <property type="evidence" value="ECO:0007669"/>
    <property type="project" value="InterPro"/>
</dbReference>
<dbReference type="GO" id="GO:0006412">
    <property type="term" value="P:translation"/>
    <property type="evidence" value="ECO:0007669"/>
    <property type="project" value="UniProtKB-UniRule"/>
</dbReference>
<dbReference type="CDD" id="cd00336">
    <property type="entry name" value="Ribosomal_L22"/>
    <property type="match status" value="1"/>
</dbReference>
<dbReference type="FunFam" id="3.90.470.10:FF:000001">
    <property type="entry name" value="50S ribosomal protein L22"/>
    <property type="match status" value="1"/>
</dbReference>
<dbReference type="Gene3D" id="3.90.470.10">
    <property type="entry name" value="Ribosomal protein L22/L17"/>
    <property type="match status" value="1"/>
</dbReference>
<dbReference type="HAMAP" id="MF_01331_B">
    <property type="entry name" value="Ribosomal_uL22_B"/>
    <property type="match status" value="1"/>
</dbReference>
<dbReference type="InterPro" id="IPR001063">
    <property type="entry name" value="Ribosomal_uL22"/>
</dbReference>
<dbReference type="InterPro" id="IPR005727">
    <property type="entry name" value="Ribosomal_uL22_bac/chlpt-type"/>
</dbReference>
<dbReference type="InterPro" id="IPR047867">
    <property type="entry name" value="Ribosomal_uL22_bac/org-type"/>
</dbReference>
<dbReference type="InterPro" id="IPR018260">
    <property type="entry name" value="Ribosomal_uL22_CS"/>
</dbReference>
<dbReference type="InterPro" id="IPR036394">
    <property type="entry name" value="Ribosomal_uL22_sf"/>
</dbReference>
<dbReference type="NCBIfam" id="TIGR01044">
    <property type="entry name" value="rplV_bact"/>
    <property type="match status" value="1"/>
</dbReference>
<dbReference type="PANTHER" id="PTHR13501">
    <property type="entry name" value="CHLOROPLAST 50S RIBOSOMAL PROTEIN L22-RELATED"/>
    <property type="match status" value="1"/>
</dbReference>
<dbReference type="PANTHER" id="PTHR13501:SF8">
    <property type="entry name" value="LARGE RIBOSOMAL SUBUNIT PROTEIN UL22M"/>
    <property type="match status" value="1"/>
</dbReference>
<dbReference type="Pfam" id="PF00237">
    <property type="entry name" value="Ribosomal_L22"/>
    <property type="match status" value="1"/>
</dbReference>
<dbReference type="SUPFAM" id="SSF54843">
    <property type="entry name" value="Ribosomal protein L22"/>
    <property type="match status" value="1"/>
</dbReference>
<dbReference type="PROSITE" id="PS00464">
    <property type="entry name" value="RIBOSOMAL_L22"/>
    <property type="match status" value="1"/>
</dbReference>
<proteinExistence type="inferred from homology"/>
<organism>
    <name type="scientific">Dechloromonas aromatica (strain RCB)</name>
    <dbReference type="NCBI Taxonomy" id="159087"/>
    <lineage>
        <taxon>Bacteria</taxon>
        <taxon>Pseudomonadati</taxon>
        <taxon>Pseudomonadota</taxon>
        <taxon>Betaproteobacteria</taxon>
        <taxon>Rhodocyclales</taxon>
        <taxon>Azonexaceae</taxon>
        <taxon>Dechloromonas</taxon>
    </lineage>
</organism>
<accession>Q47J98</accession>
<gene>
    <name evidence="1" type="primary">rplV</name>
    <name type="ordered locus">Daro_0324</name>
</gene>
<sequence length="109" mass="11798">METRASLRGVRLSAQKGRLVADLVRGKPVGQALNILAFCPKKGAGIVKKVLESAIANAEHNDGADIDELTVKTIYVEKGMVLKRFTARAKGRGNRIIKPTCHIYLTVGN</sequence>
<protein>
    <recommendedName>
        <fullName evidence="1">Large ribosomal subunit protein uL22</fullName>
    </recommendedName>
    <alternativeName>
        <fullName evidence="2">50S ribosomal protein L22</fullName>
    </alternativeName>
</protein>
<name>RL22_DECAR</name>
<reference key="1">
    <citation type="journal article" date="2009" name="BMC Genomics">
        <title>Metabolic analysis of the soil microbe Dechloromonas aromatica str. RCB: indications of a surprisingly complex life-style and cryptic anaerobic pathways for aromatic degradation.</title>
        <authorList>
            <person name="Salinero K.K."/>
            <person name="Keller K."/>
            <person name="Feil W.S."/>
            <person name="Feil H."/>
            <person name="Trong S."/>
            <person name="Di Bartolo G."/>
            <person name="Lapidus A."/>
        </authorList>
    </citation>
    <scope>NUCLEOTIDE SEQUENCE [LARGE SCALE GENOMIC DNA]</scope>
    <source>
        <strain>RCB</strain>
    </source>
</reference>
<evidence type="ECO:0000255" key="1">
    <source>
        <dbReference type="HAMAP-Rule" id="MF_01331"/>
    </source>
</evidence>
<evidence type="ECO:0000305" key="2"/>
<comment type="function">
    <text evidence="1">This protein binds specifically to 23S rRNA; its binding is stimulated by other ribosomal proteins, e.g. L4, L17, and L20. It is important during the early stages of 50S assembly. It makes multiple contacts with different domains of the 23S rRNA in the assembled 50S subunit and ribosome (By similarity).</text>
</comment>
<comment type="function">
    <text evidence="1">The globular domain of the protein is located near the polypeptide exit tunnel on the outside of the subunit, while an extended beta-hairpin is found that lines the wall of the exit tunnel in the center of the 70S ribosome.</text>
</comment>
<comment type="subunit">
    <text evidence="1">Part of the 50S ribosomal subunit.</text>
</comment>
<comment type="similarity">
    <text evidence="1">Belongs to the universal ribosomal protein uL22 family.</text>
</comment>